<reference key="1">
    <citation type="journal article" date="2009" name="PLoS Genet.">
        <title>Organised genome dynamics in the Escherichia coli species results in highly diverse adaptive paths.</title>
        <authorList>
            <person name="Touchon M."/>
            <person name="Hoede C."/>
            <person name="Tenaillon O."/>
            <person name="Barbe V."/>
            <person name="Baeriswyl S."/>
            <person name="Bidet P."/>
            <person name="Bingen E."/>
            <person name="Bonacorsi S."/>
            <person name="Bouchier C."/>
            <person name="Bouvet O."/>
            <person name="Calteau A."/>
            <person name="Chiapello H."/>
            <person name="Clermont O."/>
            <person name="Cruveiller S."/>
            <person name="Danchin A."/>
            <person name="Diard M."/>
            <person name="Dossat C."/>
            <person name="Karoui M.E."/>
            <person name="Frapy E."/>
            <person name="Garry L."/>
            <person name="Ghigo J.M."/>
            <person name="Gilles A.M."/>
            <person name="Johnson J."/>
            <person name="Le Bouguenec C."/>
            <person name="Lescat M."/>
            <person name="Mangenot S."/>
            <person name="Martinez-Jehanne V."/>
            <person name="Matic I."/>
            <person name="Nassif X."/>
            <person name="Oztas S."/>
            <person name="Petit M.A."/>
            <person name="Pichon C."/>
            <person name="Rouy Z."/>
            <person name="Ruf C.S."/>
            <person name="Schneider D."/>
            <person name="Tourret J."/>
            <person name="Vacherie B."/>
            <person name="Vallenet D."/>
            <person name="Medigue C."/>
            <person name="Rocha E.P.C."/>
            <person name="Denamur E."/>
        </authorList>
    </citation>
    <scope>NUCLEOTIDE SEQUENCE [LARGE SCALE GENOMIC DNA]</scope>
    <source>
        <strain>ATCC 35469 / DSM 13698 / BCRC 15582 / CCUG 18766 / IAM 14443 / JCM 21226 / LMG 7866 / NBRC 102419 / NCTC 12128 / CDC 0568-73</strain>
    </source>
</reference>
<keyword id="KW-0687">Ribonucleoprotein</keyword>
<keyword id="KW-0689">Ribosomal protein</keyword>
<dbReference type="EMBL" id="CU928158">
    <property type="protein sequence ID" value="CAQ90655.1"/>
    <property type="molecule type" value="Genomic_DNA"/>
</dbReference>
<dbReference type="RefSeq" id="WP_000940595.1">
    <property type="nucleotide sequence ID" value="NC_011740.1"/>
</dbReference>
<dbReference type="SMR" id="B7LR52"/>
<dbReference type="GeneID" id="93778796"/>
<dbReference type="KEGG" id="efe:EFER_3162"/>
<dbReference type="HOGENOM" id="CLU_095424_4_1_6"/>
<dbReference type="OrthoDB" id="9803474at2"/>
<dbReference type="Proteomes" id="UP000000745">
    <property type="component" value="Chromosome"/>
</dbReference>
<dbReference type="GO" id="GO:0022625">
    <property type="term" value="C:cytosolic large ribosomal subunit"/>
    <property type="evidence" value="ECO:0007669"/>
    <property type="project" value="TreeGrafter"/>
</dbReference>
<dbReference type="GO" id="GO:0003735">
    <property type="term" value="F:structural constituent of ribosome"/>
    <property type="evidence" value="ECO:0007669"/>
    <property type="project" value="InterPro"/>
</dbReference>
<dbReference type="GO" id="GO:0006412">
    <property type="term" value="P:translation"/>
    <property type="evidence" value="ECO:0007669"/>
    <property type="project" value="UniProtKB-UniRule"/>
</dbReference>
<dbReference type="FunFam" id="2.40.50.100:FF:000001">
    <property type="entry name" value="50S ribosomal protein L27"/>
    <property type="match status" value="1"/>
</dbReference>
<dbReference type="Gene3D" id="2.40.50.100">
    <property type="match status" value="1"/>
</dbReference>
<dbReference type="HAMAP" id="MF_00539">
    <property type="entry name" value="Ribosomal_bL27"/>
    <property type="match status" value="1"/>
</dbReference>
<dbReference type="InterPro" id="IPR001684">
    <property type="entry name" value="Ribosomal_bL27"/>
</dbReference>
<dbReference type="InterPro" id="IPR018261">
    <property type="entry name" value="Ribosomal_bL27_CS"/>
</dbReference>
<dbReference type="NCBIfam" id="TIGR00062">
    <property type="entry name" value="L27"/>
    <property type="match status" value="1"/>
</dbReference>
<dbReference type="PANTHER" id="PTHR15893:SF0">
    <property type="entry name" value="LARGE RIBOSOMAL SUBUNIT PROTEIN BL27M"/>
    <property type="match status" value="1"/>
</dbReference>
<dbReference type="PANTHER" id="PTHR15893">
    <property type="entry name" value="RIBOSOMAL PROTEIN L27"/>
    <property type="match status" value="1"/>
</dbReference>
<dbReference type="Pfam" id="PF01016">
    <property type="entry name" value="Ribosomal_L27"/>
    <property type="match status" value="1"/>
</dbReference>
<dbReference type="PRINTS" id="PR00063">
    <property type="entry name" value="RIBOSOMALL27"/>
</dbReference>
<dbReference type="SUPFAM" id="SSF110324">
    <property type="entry name" value="Ribosomal L27 protein-like"/>
    <property type="match status" value="1"/>
</dbReference>
<dbReference type="PROSITE" id="PS00831">
    <property type="entry name" value="RIBOSOMAL_L27"/>
    <property type="match status" value="1"/>
</dbReference>
<gene>
    <name evidence="1" type="primary">rpmA</name>
    <name type="ordered locus">EFER_3162</name>
</gene>
<organism>
    <name type="scientific">Escherichia fergusonii (strain ATCC 35469 / DSM 13698 / CCUG 18766 / IAM 14443 / JCM 21226 / LMG 7866 / NBRC 102419 / NCTC 12128 / CDC 0568-73)</name>
    <dbReference type="NCBI Taxonomy" id="585054"/>
    <lineage>
        <taxon>Bacteria</taxon>
        <taxon>Pseudomonadati</taxon>
        <taxon>Pseudomonadota</taxon>
        <taxon>Gammaproteobacteria</taxon>
        <taxon>Enterobacterales</taxon>
        <taxon>Enterobacteriaceae</taxon>
        <taxon>Escherichia</taxon>
    </lineage>
</organism>
<protein>
    <recommendedName>
        <fullName evidence="1">Large ribosomal subunit protein bL27</fullName>
    </recommendedName>
    <alternativeName>
        <fullName evidence="3">50S ribosomal protein L27</fullName>
    </alternativeName>
</protein>
<name>RL27_ESCF3</name>
<sequence length="85" mass="9124">MAHKKAGGSTRNGRDSEAKRLGVKRFGGESVLAGSIIVRQRGTKFHAGANVGCGRDHTLFAKADGKVKFEVKGPKNRKFISIEAE</sequence>
<comment type="similarity">
    <text evidence="1">Belongs to the bacterial ribosomal protein bL27 family.</text>
</comment>
<feature type="chain" id="PRO_1000128750" description="Large ribosomal subunit protein bL27">
    <location>
        <begin position="1"/>
        <end position="85"/>
    </location>
</feature>
<feature type="region of interest" description="Disordered" evidence="2">
    <location>
        <begin position="1"/>
        <end position="20"/>
    </location>
</feature>
<accession>B7LR52</accession>
<evidence type="ECO:0000255" key="1">
    <source>
        <dbReference type="HAMAP-Rule" id="MF_00539"/>
    </source>
</evidence>
<evidence type="ECO:0000256" key="2">
    <source>
        <dbReference type="SAM" id="MobiDB-lite"/>
    </source>
</evidence>
<evidence type="ECO:0000305" key="3"/>
<proteinExistence type="inferred from homology"/>